<dbReference type="EMBL" id="AY261366">
    <property type="status" value="NOT_ANNOTATED_CDS"/>
    <property type="molecule type" value="Genomic_DNA"/>
</dbReference>
<dbReference type="SMR" id="P0C9V2"/>
<dbReference type="Proteomes" id="UP000000858">
    <property type="component" value="Segment"/>
</dbReference>
<dbReference type="InterPro" id="IPR004858">
    <property type="entry name" value="MGF_505"/>
</dbReference>
<dbReference type="Pfam" id="PF03158">
    <property type="entry name" value="DUF249"/>
    <property type="match status" value="1"/>
</dbReference>
<feature type="chain" id="PRO_0000373353" description="Protein MGF 505-10R">
    <location>
        <begin position="1"/>
        <end position="543"/>
    </location>
</feature>
<reference key="1">
    <citation type="submission" date="2003-03" db="EMBL/GenBank/DDBJ databases">
        <title>African swine fever virus genomes.</title>
        <authorList>
            <person name="Kutish G.F."/>
            <person name="Rock D.L."/>
        </authorList>
    </citation>
    <scope>NUCLEOTIDE SEQUENCE [LARGE SCALE GENOMIC DNA]</scope>
</reference>
<gene>
    <name type="ordered locus">War-043</name>
</gene>
<organism>
    <name type="scientific">African swine fever virus (isolate Warthog/Namibia/Wart80/1980)</name>
    <name type="common">ASFV</name>
    <dbReference type="NCBI Taxonomy" id="561444"/>
    <lineage>
        <taxon>Viruses</taxon>
        <taxon>Varidnaviria</taxon>
        <taxon>Bamfordvirae</taxon>
        <taxon>Nucleocytoviricota</taxon>
        <taxon>Pokkesviricetes</taxon>
        <taxon>Asfuvirales</taxon>
        <taxon>Asfarviridae</taxon>
        <taxon>Asfivirus</taxon>
        <taxon>African swine fever virus</taxon>
    </lineage>
</organism>
<protein>
    <recommendedName>
        <fullName>Protein MGF 505-10R</fullName>
    </recommendedName>
</protein>
<keyword id="KW-0244">Early protein</keyword>
<organismHost>
    <name type="scientific">Ornithodoros</name>
    <name type="common">relapsing fever ticks</name>
    <dbReference type="NCBI Taxonomy" id="6937"/>
</organismHost>
<organismHost>
    <name type="scientific">Phacochoerus aethiopicus</name>
    <name type="common">Warthog</name>
    <dbReference type="NCBI Taxonomy" id="85517"/>
</organismHost>
<organismHost>
    <name type="scientific">Phacochoerus africanus</name>
    <name type="common">Warthog</name>
    <dbReference type="NCBI Taxonomy" id="41426"/>
</organismHost>
<organismHost>
    <name type="scientific">Potamochoerus larvatus</name>
    <name type="common">Bushpig</name>
    <dbReference type="NCBI Taxonomy" id="273792"/>
</organismHost>
<organismHost>
    <name type="scientific">Sus scrofa</name>
    <name type="common">Pig</name>
    <dbReference type="NCBI Taxonomy" id="9823"/>
</organismHost>
<proteinExistence type="inferred from homology"/>
<comment type="function">
    <text evidence="1">Plays a role in virus cell tropism, and may be required for efficient virus replication in macrophages.</text>
</comment>
<comment type="induction">
    <text evidence="2">Expressed in the early phase of the viral replicative cycle.</text>
</comment>
<comment type="similarity">
    <text evidence="2">Belongs to the asfivirus MGF 505 family.</text>
</comment>
<name>50510_ASFWA</name>
<accession>P0C9V2</accession>
<sequence length="543" mass="63286">MFSLQELCRKNIYILPYPLGKHVLQQLGLYWKGHGSLQRIGDDHVLLQQDLIFSINEALRMAGEEGNNEVVKLLLLWEGNLHYAIIGALEGDRYDLIHKYYDQIGDCHKILPLIQDPQIFEKCHELSNSCNIRCLLEHAVKHDMLSILQKHREQIRLHLALTQILFELACHERKNDIIRWIGYSLHIHHLETIFDVAFAHKNLSLYVLGYELLMHKVNTEAAYIELPNLLSYHLRTAAAGGLLNFMLETIKHGGYVDKTVLSAAIRYKHRKIVAHFIHQVPRKTVKKLLLYAVQARAPKKTLNLLLSSLNYSVHTITKQLVHNVVIYSSTLVVKLLLMRRKNKLNLVDAVLARLVKYSTYTDIVQFMSEFSVSPERVIKMAARESRTFLIEMISKAAWGNHPQTLIHHLKQLAHTMKSQSGKDLIIYTIHYIYLNSNMLVAEEEKNIFKLAKFYANHNAVNRFKQVCEDYYALDVDARFKTLILECFEIAVQKNYPRIANIVDDYVRFLFYRGDITEEEIHEAYSLKDAEFYVDLKWLQHDLF</sequence>
<evidence type="ECO:0000250" key="1">
    <source>
        <dbReference type="UniProtKB" id="Q89869"/>
    </source>
</evidence>
<evidence type="ECO:0000305" key="2"/>